<comment type="function">
    <text evidence="1">One of the primary rRNA binding proteins, it binds specifically to the 5'-end of 16S ribosomal RNA.</text>
</comment>
<comment type="subunit">
    <text evidence="1">Part of the 30S ribosomal subunit.</text>
</comment>
<comment type="similarity">
    <text evidence="1">Belongs to the universal ribosomal protein uS17 family.</text>
</comment>
<dbReference type="EMBL" id="AE017226">
    <property type="protein sequence ID" value="AAS11267.1"/>
    <property type="molecule type" value="Genomic_DNA"/>
</dbReference>
<dbReference type="RefSeq" id="NP_971386.1">
    <property type="nucleotide sequence ID" value="NC_002967.9"/>
</dbReference>
<dbReference type="RefSeq" id="WP_002670009.1">
    <property type="nucleotide sequence ID" value="NC_002967.9"/>
</dbReference>
<dbReference type="SMR" id="Q73PM3"/>
<dbReference type="STRING" id="243275.TDE_0776"/>
<dbReference type="PaxDb" id="243275-TDE_0776"/>
<dbReference type="GeneID" id="2740654"/>
<dbReference type="KEGG" id="tde:TDE_0776"/>
<dbReference type="PATRIC" id="fig|243275.7.peg.749"/>
<dbReference type="eggNOG" id="COG0186">
    <property type="taxonomic scope" value="Bacteria"/>
</dbReference>
<dbReference type="HOGENOM" id="CLU_073626_1_0_12"/>
<dbReference type="OrthoDB" id="9811714at2"/>
<dbReference type="Proteomes" id="UP000008212">
    <property type="component" value="Chromosome"/>
</dbReference>
<dbReference type="GO" id="GO:0022627">
    <property type="term" value="C:cytosolic small ribosomal subunit"/>
    <property type="evidence" value="ECO:0007669"/>
    <property type="project" value="TreeGrafter"/>
</dbReference>
<dbReference type="GO" id="GO:0019843">
    <property type="term" value="F:rRNA binding"/>
    <property type="evidence" value="ECO:0007669"/>
    <property type="project" value="UniProtKB-UniRule"/>
</dbReference>
<dbReference type="GO" id="GO:0003735">
    <property type="term" value="F:structural constituent of ribosome"/>
    <property type="evidence" value="ECO:0007669"/>
    <property type="project" value="InterPro"/>
</dbReference>
<dbReference type="GO" id="GO:0006412">
    <property type="term" value="P:translation"/>
    <property type="evidence" value="ECO:0007669"/>
    <property type="project" value="UniProtKB-UniRule"/>
</dbReference>
<dbReference type="CDD" id="cd00364">
    <property type="entry name" value="Ribosomal_uS17"/>
    <property type="match status" value="1"/>
</dbReference>
<dbReference type="Gene3D" id="2.40.50.140">
    <property type="entry name" value="Nucleic acid-binding proteins"/>
    <property type="match status" value="1"/>
</dbReference>
<dbReference type="HAMAP" id="MF_01345_B">
    <property type="entry name" value="Ribosomal_uS17_B"/>
    <property type="match status" value="1"/>
</dbReference>
<dbReference type="InterPro" id="IPR012340">
    <property type="entry name" value="NA-bd_OB-fold"/>
</dbReference>
<dbReference type="InterPro" id="IPR000266">
    <property type="entry name" value="Ribosomal_uS17"/>
</dbReference>
<dbReference type="InterPro" id="IPR019984">
    <property type="entry name" value="Ribosomal_uS17_bact/chlr"/>
</dbReference>
<dbReference type="InterPro" id="IPR019979">
    <property type="entry name" value="Ribosomal_uS17_CS"/>
</dbReference>
<dbReference type="NCBIfam" id="NF004123">
    <property type="entry name" value="PRK05610.1"/>
    <property type="match status" value="1"/>
</dbReference>
<dbReference type="NCBIfam" id="TIGR03635">
    <property type="entry name" value="uS17_bact"/>
    <property type="match status" value="1"/>
</dbReference>
<dbReference type="PANTHER" id="PTHR10744">
    <property type="entry name" value="40S RIBOSOMAL PROTEIN S11 FAMILY MEMBER"/>
    <property type="match status" value="1"/>
</dbReference>
<dbReference type="PANTHER" id="PTHR10744:SF1">
    <property type="entry name" value="SMALL RIBOSOMAL SUBUNIT PROTEIN US17M"/>
    <property type="match status" value="1"/>
</dbReference>
<dbReference type="Pfam" id="PF00366">
    <property type="entry name" value="Ribosomal_S17"/>
    <property type="match status" value="1"/>
</dbReference>
<dbReference type="PRINTS" id="PR00973">
    <property type="entry name" value="RIBOSOMALS17"/>
</dbReference>
<dbReference type="SUPFAM" id="SSF50249">
    <property type="entry name" value="Nucleic acid-binding proteins"/>
    <property type="match status" value="1"/>
</dbReference>
<dbReference type="PROSITE" id="PS00056">
    <property type="entry name" value="RIBOSOMAL_S17"/>
    <property type="match status" value="1"/>
</dbReference>
<sequence length="90" mass="10473">METTENTKKIGKREFVGIVTSDKMNKTIVVEVRTKKLHKLYKKYVSSSKKYKAHDEENTAHIGDTVRIVEHKPISKDKAWMLTEVIERAK</sequence>
<gene>
    <name evidence="1" type="primary">rpsQ</name>
    <name type="ordered locus">TDE_0776</name>
</gene>
<reference key="1">
    <citation type="journal article" date="2004" name="Proc. Natl. Acad. Sci. U.S.A.">
        <title>Comparison of the genome of the oral pathogen Treponema denticola with other spirochete genomes.</title>
        <authorList>
            <person name="Seshadri R."/>
            <person name="Myers G.S.A."/>
            <person name="Tettelin H."/>
            <person name="Eisen J.A."/>
            <person name="Heidelberg J.F."/>
            <person name="Dodson R.J."/>
            <person name="Davidsen T.M."/>
            <person name="DeBoy R.T."/>
            <person name="Fouts D.E."/>
            <person name="Haft D.H."/>
            <person name="Selengut J."/>
            <person name="Ren Q."/>
            <person name="Brinkac L.M."/>
            <person name="Madupu R."/>
            <person name="Kolonay J.F."/>
            <person name="Durkin S.A."/>
            <person name="Daugherty S.C."/>
            <person name="Shetty J."/>
            <person name="Shvartsbeyn A."/>
            <person name="Gebregeorgis E."/>
            <person name="Geer K."/>
            <person name="Tsegaye G."/>
            <person name="Malek J.A."/>
            <person name="Ayodeji B."/>
            <person name="Shatsman S."/>
            <person name="McLeod M.P."/>
            <person name="Smajs D."/>
            <person name="Howell J.K."/>
            <person name="Pal S."/>
            <person name="Amin A."/>
            <person name="Vashisth P."/>
            <person name="McNeill T.Z."/>
            <person name="Xiang Q."/>
            <person name="Sodergren E."/>
            <person name="Baca E."/>
            <person name="Weinstock G.M."/>
            <person name="Norris S.J."/>
            <person name="Fraser C.M."/>
            <person name="Paulsen I.T."/>
        </authorList>
    </citation>
    <scope>NUCLEOTIDE SEQUENCE [LARGE SCALE GENOMIC DNA]</scope>
    <source>
        <strain>ATCC 35405 / DSM 14222 / CIP 103919 / JCM 8153 / KCTC 15104</strain>
    </source>
</reference>
<name>RS17_TREDE</name>
<accession>Q73PM3</accession>
<evidence type="ECO:0000255" key="1">
    <source>
        <dbReference type="HAMAP-Rule" id="MF_01345"/>
    </source>
</evidence>
<evidence type="ECO:0000305" key="2"/>
<protein>
    <recommendedName>
        <fullName evidence="1">Small ribosomal subunit protein uS17</fullName>
    </recommendedName>
    <alternativeName>
        <fullName evidence="2">30S ribosomal protein S17</fullName>
    </alternativeName>
</protein>
<organism>
    <name type="scientific">Treponema denticola (strain ATCC 35405 / DSM 14222 / CIP 103919 / JCM 8153 / KCTC 15104)</name>
    <dbReference type="NCBI Taxonomy" id="243275"/>
    <lineage>
        <taxon>Bacteria</taxon>
        <taxon>Pseudomonadati</taxon>
        <taxon>Spirochaetota</taxon>
        <taxon>Spirochaetia</taxon>
        <taxon>Spirochaetales</taxon>
        <taxon>Treponemataceae</taxon>
        <taxon>Treponema</taxon>
    </lineage>
</organism>
<proteinExistence type="inferred from homology"/>
<feature type="chain" id="PRO_0000233599" description="Small ribosomal subunit protein uS17">
    <location>
        <begin position="1"/>
        <end position="90"/>
    </location>
</feature>
<keyword id="KW-1185">Reference proteome</keyword>
<keyword id="KW-0687">Ribonucleoprotein</keyword>
<keyword id="KW-0689">Ribosomal protein</keyword>
<keyword id="KW-0694">RNA-binding</keyword>
<keyword id="KW-0699">rRNA-binding</keyword>